<feature type="chain" id="PRO_0000090512" description="Photosystem II D2 protein">
    <location>
        <begin position="1"/>
        <end position="351"/>
    </location>
</feature>
<feature type="transmembrane region" description="Helical" evidence="1">
    <location>
        <begin position="39"/>
        <end position="59"/>
    </location>
</feature>
<feature type="transmembrane region" description="Helical" evidence="1">
    <location>
        <begin position="123"/>
        <end position="139"/>
    </location>
</feature>
<feature type="transmembrane region" description="Helical" evidence="1">
    <location>
        <begin position="151"/>
        <end position="164"/>
    </location>
</feature>
<feature type="transmembrane region" description="Helical" evidence="1">
    <location>
        <begin position="206"/>
        <end position="226"/>
    </location>
</feature>
<feature type="transmembrane region" description="Helical" evidence="1">
    <location>
        <begin position="277"/>
        <end position="293"/>
    </location>
</feature>
<feature type="binding site" description="axial binding residue" evidence="1">
    <location>
        <position position="116"/>
    </location>
    <ligand>
        <name>chlorophyll a</name>
        <dbReference type="ChEBI" id="CHEBI:58416"/>
        <label>ChlzD2</label>
    </ligand>
    <ligandPart>
        <name>Mg</name>
        <dbReference type="ChEBI" id="CHEBI:25107"/>
    </ligandPart>
</feature>
<feature type="binding site" evidence="1">
    <location>
        <position position="128"/>
    </location>
    <ligand>
        <name>pheophytin a</name>
        <dbReference type="ChEBI" id="CHEBI:136840"/>
        <label>D2</label>
    </ligand>
</feature>
<feature type="binding site" evidence="1">
    <location>
        <position position="141"/>
    </location>
    <ligand>
        <name>pheophytin a</name>
        <dbReference type="ChEBI" id="CHEBI:136840"/>
        <label>D2</label>
    </ligand>
</feature>
<feature type="binding site" description="axial binding residue" evidence="1">
    <location>
        <position position="196"/>
    </location>
    <ligand>
        <name>chlorophyll a</name>
        <dbReference type="ChEBI" id="CHEBI:58416"/>
        <label>PD2</label>
    </ligand>
    <ligandPart>
        <name>Mg</name>
        <dbReference type="ChEBI" id="CHEBI:25107"/>
    </ligandPart>
</feature>
<feature type="binding site" evidence="1">
    <location>
        <position position="213"/>
    </location>
    <ligand>
        <name>a plastoquinone</name>
        <dbReference type="ChEBI" id="CHEBI:17757"/>
        <label>Q(A)</label>
    </ligand>
</feature>
<feature type="binding site" evidence="1">
    <location>
        <position position="213"/>
    </location>
    <ligand>
        <name>Fe cation</name>
        <dbReference type="ChEBI" id="CHEBI:24875"/>
        <note>ligand shared with heterodimeric partner</note>
    </ligand>
</feature>
<feature type="binding site" evidence="1">
    <location>
        <position position="260"/>
    </location>
    <ligand>
        <name>a plastoquinone</name>
        <dbReference type="ChEBI" id="CHEBI:17757"/>
        <label>Q(A)</label>
    </ligand>
</feature>
<feature type="binding site" evidence="1">
    <location>
        <position position="267"/>
    </location>
    <ligand>
        <name>Fe cation</name>
        <dbReference type="ChEBI" id="CHEBI:24875"/>
        <note>ligand shared with heterodimeric partner</note>
    </ligand>
</feature>
<dbReference type="EC" id="1.10.3.9" evidence="1"/>
<dbReference type="EMBL" id="Z67753">
    <property type="protein sequence ID" value="CAA91721.1"/>
    <property type="molecule type" value="Genomic_DNA"/>
</dbReference>
<dbReference type="PIR" id="S78348">
    <property type="entry name" value="S78348"/>
</dbReference>
<dbReference type="RefSeq" id="NP_043689.1">
    <property type="nucleotide sequence ID" value="NC_001713.1"/>
</dbReference>
<dbReference type="SMR" id="P49478"/>
<dbReference type="GeneID" id="801723"/>
<dbReference type="GO" id="GO:0009535">
    <property type="term" value="C:chloroplast thylakoid membrane"/>
    <property type="evidence" value="ECO:0007669"/>
    <property type="project" value="UniProtKB-SubCell"/>
</dbReference>
<dbReference type="GO" id="GO:0009523">
    <property type="term" value="C:photosystem II"/>
    <property type="evidence" value="ECO:0007669"/>
    <property type="project" value="UniProtKB-KW"/>
</dbReference>
<dbReference type="GO" id="GO:0016168">
    <property type="term" value="F:chlorophyll binding"/>
    <property type="evidence" value="ECO:0007669"/>
    <property type="project" value="UniProtKB-UniRule"/>
</dbReference>
<dbReference type="GO" id="GO:0045156">
    <property type="term" value="F:electron transporter, transferring electrons within the cyclic electron transport pathway of photosynthesis activity"/>
    <property type="evidence" value="ECO:0007669"/>
    <property type="project" value="InterPro"/>
</dbReference>
<dbReference type="GO" id="GO:0005506">
    <property type="term" value="F:iron ion binding"/>
    <property type="evidence" value="ECO:0007669"/>
    <property type="project" value="UniProtKB-UniRule"/>
</dbReference>
<dbReference type="GO" id="GO:0016491">
    <property type="term" value="F:oxidoreductase activity"/>
    <property type="evidence" value="ECO:0007669"/>
    <property type="project" value="UniProtKB-KW"/>
</dbReference>
<dbReference type="GO" id="GO:0009772">
    <property type="term" value="P:photosynthetic electron transport in photosystem II"/>
    <property type="evidence" value="ECO:0007669"/>
    <property type="project" value="InterPro"/>
</dbReference>
<dbReference type="CDD" id="cd09288">
    <property type="entry name" value="Photosystem-II_D2"/>
    <property type="match status" value="1"/>
</dbReference>
<dbReference type="FunFam" id="1.20.85.10:FF:000001">
    <property type="entry name" value="photosystem II D2 protein-like"/>
    <property type="match status" value="1"/>
</dbReference>
<dbReference type="Gene3D" id="1.20.85.10">
    <property type="entry name" value="Photosystem II protein D1-like"/>
    <property type="match status" value="1"/>
</dbReference>
<dbReference type="HAMAP" id="MF_01383">
    <property type="entry name" value="PSII_PsbD_D2"/>
    <property type="match status" value="1"/>
</dbReference>
<dbReference type="InterPro" id="IPR055266">
    <property type="entry name" value="D1/D2"/>
</dbReference>
<dbReference type="InterPro" id="IPR036854">
    <property type="entry name" value="Photo_II_D1/D2_sf"/>
</dbReference>
<dbReference type="InterPro" id="IPR000484">
    <property type="entry name" value="Photo_RC_L/M"/>
</dbReference>
<dbReference type="InterPro" id="IPR055265">
    <property type="entry name" value="Photo_RC_L/M_CS"/>
</dbReference>
<dbReference type="InterPro" id="IPR005868">
    <property type="entry name" value="PSII_PsbD/D2"/>
</dbReference>
<dbReference type="NCBIfam" id="TIGR01152">
    <property type="entry name" value="psbD"/>
    <property type="match status" value="1"/>
</dbReference>
<dbReference type="PANTHER" id="PTHR33149:SF12">
    <property type="entry name" value="PHOTOSYSTEM II D2 PROTEIN"/>
    <property type="match status" value="1"/>
</dbReference>
<dbReference type="PANTHER" id="PTHR33149">
    <property type="entry name" value="PHOTOSYSTEM II PROTEIN D1"/>
    <property type="match status" value="1"/>
</dbReference>
<dbReference type="Pfam" id="PF00124">
    <property type="entry name" value="Photo_RC"/>
    <property type="match status" value="1"/>
</dbReference>
<dbReference type="PRINTS" id="PR00256">
    <property type="entry name" value="REACTNCENTRE"/>
</dbReference>
<dbReference type="SUPFAM" id="SSF81483">
    <property type="entry name" value="Bacterial photosystem II reaction centre, L and M subunits"/>
    <property type="match status" value="1"/>
</dbReference>
<dbReference type="PROSITE" id="PS00244">
    <property type="entry name" value="REACTION_CENTER"/>
    <property type="match status" value="1"/>
</dbReference>
<geneLocation type="chloroplast"/>
<comment type="function">
    <text evidence="1">Photosystem II (PSII) is a light-driven water:plastoquinone oxidoreductase that uses light energy to abstract electrons from H(2)O, generating O(2) and a proton gradient subsequently used for ATP formation. It consists of a core antenna complex that captures photons, and an electron transfer chain that converts photonic excitation into a charge separation. The D1/D2 (PsbA/PsbD) reaction center heterodimer binds P680, the primary electron donor of PSII as well as several subsequent electron acceptors. D2 is needed for assembly of a stable PSII complex.</text>
</comment>
<comment type="catalytic activity">
    <reaction evidence="1">
        <text>2 a plastoquinone + 4 hnu + 2 H2O = 2 a plastoquinol + O2</text>
        <dbReference type="Rhea" id="RHEA:36359"/>
        <dbReference type="Rhea" id="RHEA-COMP:9561"/>
        <dbReference type="Rhea" id="RHEA-COMP:9562"/>
        <dbReference type="ChEBI" id="CHEBI:15377"/>
        <dbReference type="ChEBI" id="CHEBI:15379"/>
        <dbReference type="ChEBI" id="CHEBI:17757"/>
        <dbReference type="ChEBI" id="CHEBI:30212"/>
        <dbReference type="ChEBI" id="CHEBI:62192"/>
        <dbReference type="EC" id="1.10.3.9"/>
    </reaction>
</comment>
<comment type="cofactor">
    <text evidence="1">The D1/D2 heterodimer binds P680, chlorophylls that are the primary electron donor of PSII, and subsequent electron acceptors. It shares a non-heme iron and each subunit binds pheophytin, quinone, additional chlorophylls, carotenoids and lipids. There is also a Cl(-1) ion associated with D1 and D2, which is required for oxygen evolution. The PSII complex binds additional chlorophylls, carotenoids and specific lipids.</text>
</comment>
<comment type="subunit">
    <text evidence="1">PSII is composed of 1 copy each of membrane proteins PsbA, PsbB, PsbC, PsbD, PsbE, PsbF, PsbH, PsbI, PsbJ, PsbK, PsbL, PsbM, PsbT, PsbX, PsbY, PsbZ, Psb30/Ycf12, at least 3 peripheral proteins of the oxygen-evolving complex and a large number of cofactors. It forms dimeric complexes.</text>
</comment>
<comment type="subcellular location">
    <subcellularLocation>
        <location evidence="1">Plastid</location>
        <location evidence="1">Chloroplast thylakoid membrane</location>
        <topology evidence="1">Multi-pass membrane protein</topology>
    </subcellularLocation>
</comment>
<comment type="miscellaneous">
    <text evidence="1">2 of the reaction center chlorophylls (ChlD1 and ChlD2) are entirely coordinated by water.</text>
</comment>
<comment type="similarity">
    <text evidence="1">Belongs to the reaction center PufL/M/PsbA/D family.</text>
</comment>
<proteinExistence type="inferred from homology"/>
<organism>
    <name type="scientific">Trieres chinensis</name>
    <name type="common">Marine centric diatom</name>
    <name type="synonym">Odontella sinensis</name>
    <dbReference type="NCBI Taxonomy" id="1514140"/>
    <lineage>
        <taxon>Eukaryota</taxon>
        <taxon>Sar</taxon>
        <taxon>Stramenopiles</taxon>
        <taxon>Ochrophyta</taxon>
        <taxon>Bacillariophyta</taxon>
        <taxon>Mediophyceae</taxon>
        <taxon>Biddulphiophycidae</taxon>
        <taxon>Eupodiscales</taxon>
        <taxon>Parodontellaceae</taxon>
        <taxon>Trieres</taxon>
    </lineage>
</organism>
<protein>
    <recommendedName>
        <fullName evidence="1">Photosystem II D2 protein</fullName>
        <shortName evidence="1">PSII D2 protein</shortName>
        <ecNumber evidence="1">1.10.3.9</ecNumber>
    </recommendedName>
    <alternativeName>
        <fullName evidence="1">Photosystem Q(A) protein</fullName>
    </alternativeName>
</protein>
<accession>P49478</accession>
<gene>
    <name evidence="1" type="primary">psbD</name>
</gene>
<evidence type="ECO:0000255" key="1">
    <source>
        <dbReference type="HAMAP-Rule" id="MF_01383"/>
    </source>
</evidence>
<name>PSBD_TRICV</name>
<sequence>MTIAIGQNQERGLFDLIDDWLKKDRFVFIGWSGLLLFPTAYLAAGGWMTGTTFVTSWYTHGLASSYLEGCNFLTAAVSTPANSMGHSLLLLWGPEAQGDFTRWCQIGGLWAFIALHGAFGLIGFCLRQFEIARLVGIRPYNAIAFSGPIAVFVSVFLLYPLGQASWFFAPSFGVAAIFRFLLFLQGFHNWTLNPFHMMGVAGILGGALLCAIHGATVENTLFEDGDAANTFRAFTPTQSEETYSMVTANRFWSQIFGVAFSNKRWLHFFMLFVPVTGLWTSAIGIVGLALNLRAYDFVSQELRAAEDPEFETFYTKNILLNEGIRAWMAAQDQPHENFVFPEEVLPRGNAL</sequence>
<keyword id="KW-0148">Chlorophyll</keyword>
<keyword id="KW-0150">Chloroplast</keyword>
<keyword id="KW-0157">Chromophore</keyword>
<keyword id="KW-0249">Electron transport</keyword>
<keyword id="KW-0408">Iron</keyword>
<keyword id="KW-0460">Magnesium</keyword>
<keyword id="KW-0472">Membrane</keyword>
<keyword id="KW-0479">Metal-binding</keyword>
<keyword id="KW-0560">Oxidoreductase</keyword>
<keyword id="KW-0602">Photosynthesis</keyword>
<keyword id="KW-0604">Photosystem II</keyword>
<keyword id="KW-0934">Plastid</keyword>
<keyword id="KW-0793">Thylakoid</keyword>
<keyword id="KW-0812">Transmembrane</keyword>
<keyword id="KW-1133">Transmembrane helix</keyword>
<keyword id="KW-0813">Transport</keyword>
<reference key="1">
    <citation type="journal article" date="1995" name="Plant Mol. Biol. Rep.">
        <title>The chloroplast genome of a chlorophyll a+c-containing alga, Odontella sinensis.</title>
        <authorList>
            <person name="Kowallik K.V."/>
            <person name="Stoebe B."/>
            <person name="Schaffran I."/>
            <person name="Kroth-Pancic P."/>
            <person name="Freier U."/>
        </authorList>
    </citation>
    <scope>NUCLEOTIDE SEQUENCE [LARGE SCALE GENOMIC DNA]</scope>
</reference>